<accession>Q8ZQD5</accession>
<keyword id="KW-0067">ATP-binding</keyword>
<keyword id="KW-0131">Cell cycle</keyword>
<keyword id="KW-0132">Cell division</keyword>
<keyword id="KW-0997">Cell inner membrane</keyword>
<keyword id="KW-1003">Cell membrane</keyword>
<keyword id="KW-0159">Chromosome partition</keyword>
<keyword id="KW-0238">DNA-binding</keyword>
<keyword id="KW-0472">Membrane</keyword>
<keyword id="KW-0547">Nucleotide-binding</keyword>
<keyword id="KW-1185">Reference proteome</keyword>
<keyword id="KW-0812">Transmembrane</keyword>
<keyword id="KW-1133">Transmembrane helix</keyword>
<gene>
    <name type="primary">ftsK</name>
    <name type="ordered locus">STM0960</name>
</gene>
<comment type="function">
    <text evidence="1">Essential cell division protein that coordinates cell division and chromosome segregation. The N-terminus is involved in assembly of the cell-division machinery. The C-terminus functions as a DNA motor that moves dsDNA in an ATP-dependent manner towards the dif recombination site, which is located within the replication terminus region. Translocation stops specifically at Xer-dif sites, where FtsK interacts with the Xer recombinase, allowing activation of chromosome unlinking by recombination. FtsK orienting polar sequences (KOPS) guide the direction of DNA translocation. FtsK can remove proteins from DNA as it translocates, but translocation stops specifically at XerCD-dif site, thereby preventing removal of XerC and XerD from dif (By similarity).</text>
</comment>
<comment type="subunit">
    <text evidence="1">Homohexamer. Forms a ring that surrounds DNA (By similarity).</text>
</comment>
<comment type="subcellular location">
    <subcellularLocation>
        <location evidence="1">Cell inner membrane</location>
        <topology evidence="1">Multi-pass membrane protein</topology>
    </subcellularLocation>
    <text evidence="1">Located at the septum.</text>
</comment>
<comment type="domain">
    <text evidence="1">Consists of an N-terminal domain, which is sufficient for the localization to the septal ring and is required for cell division, followed by a linker domain, and a C-terminal domain, which forms the translocation motor involved in chromosome segregation. The C-terminal domain can be further subdivided into alpha, beta and gamma subdomains. The alpha and beta subdomains multimerise to produce a hexameric ring, contain the nucleotide binding motif and form the DNA pump. The gamma subdomain is a regulatory subdomain that controls translocation of DNA by recognition of KOPS motifs and interacts with XerD recombinase (By similarity).</text>
</comment>
<comment type="similarity">
    <text evidence="5">Belongs to the FtsK/SpoIIIE/SftA family.</text>
</comment>
<protein>
    <recommendedName>
        <fullName>DNA translocase FtsK</fullName>
    </recommendedName>
</protein>
<sequence>MSQEYTEDKDVTLTKLSSGRRLLEALLILIALFAVWLMAALLSFNPSDPSWSQTAWHEPIHNLGGAPGAWLADTLFFIFGVMAYTIPVIIVGGCWFAWRHQSTDDYIDYFAVSLRLIGVLALILTSCGLAAINADDIWYFASGGVIGSLLSTTLQPLLHSSGGTIMLLCIWAAGLTLFTGWSWVSIAEKLGGWLLNILTFASNRTRRDDTWVDDEEYDDEYDEETDGVQRESRRARILRGALARRKRLAEKFSNPRGRQTDAALFSGKRMDDDEDIQYSARGVAADPDDVLFSGNRATQPEYDEYDPLLNGHSVTEPVAAAAAATAVTQTWAASADPIMQTPPMPGAEPVVAQPTVEWQPVPGPQTGEPVIAPAPEGYQPHPQYAQPQEAQSAPWQQPVPVASAPQYAATPATAAEYDSLAPQETQPQWQPEPTHQPTPVYQPEPIAAEPSHMPPPVIEQPVATEPEPDTEETRPARPPLYYFEEVEEKRAREREQLAAWYQPIPEPVKENVPVKPTVSVAPSIPPVEAVAAAASLDAGIKSGALAAGAAAAAPAFSLATGGAPRPQVKEGIGPQLPRPNRVRVPTRRELASYGIKLPSQRIAEEKAREAERNQYETGAQLTDEEIDAMHQDELARQFAQSQQHRYGETYQHDTQQAEDDDTAAEAELARQFAASQQQRYSGEQPAGAQPFSLDDLDFSPMKVLVDEGPHEPLFTPGVMPESTPVQQPVAPQPQPQYQQPQQPVAPQPQYQQPQQPVAPQPQYQQPQQPVAPQPQYQQPQQPVAPQPQYQQPQQPVAPQPQYQQPQQPVAPQPQYQQPQQPVAPQPQYQQPQQPTAPQDSLIHPLLMRNGDSRPLQRPTTPLPSLDLLTPPPSEVEPVDTFALEQMARLVEARLADFRIKADVVNYSPGPVITRFELNLAPGVKAARISNLSRDLARSLSTVAVRVVEVIPGKPYVGLELPNKKRQTVYLREVLDNAKFRENPSPLTVVLGKDIAGDPVVADLAKMPHLLVAGTTGSGKSVGVNAMILSMLYKAQPEDVRFIMIDPKMLELSVYEGIPHLLTEVVTDMKDAANALRWSVNEMERRYKLMSALGVRNLAGYNEKIAEAARMGRPIPDPYWKPGDSMDVQHPVLEKLPYIVVLVDEFADLMMTVGKKVEELIARLAQKARAAGIHLVLATQRPSVDVITGLIKANIPTRIAFTVSSKIDSRTILDQGGAESLLGMGDMLYSGPNSTMPVRVHGAFVRDQEVHAVVQDWKARGRPQYVDGITSDSESEGGGGGFDGGEELDALFDQAVNFVTQKRKASISGVQRQFRIGYNRAARIIEQMEAQGIVSAQGHNGNREVLAPPPFE</sequence>
<proteinExistence type="inferred from homology"/>
<dbReference type="EMBL" id="AE006468">
    <property type="protein sequence ID" value="AAL19895.1"/>
    <property type="molecule type" value="Genomic_DNA"/>
</dbReference>
<dbReference type="RefSeq" id="NP_459936.1">
    <property type="nucleotide sequence ID" value="NC_003197.2"/>
</dbReference>
<dbReference type="RefSeq" id="WP_001542260.1">
    <property type="nucleotide sequence ID" value="NC_003197.2"/>
</dbReference>
<dbReference type="SMR" id="Q8ZQD5"/>
<dbReference type="STRING" id="99287.STM0960"/>
<dbReference type="PaxDb" id="99287-STM0960"/>
<dbReference type="GeneID" id="1252479"/>
<dbReference type="KEGG" id="stm:STM0960"/>
<dbReference type="PATRIC" id="fig|99287.12.peg.1012"/>
<dbReference type="HOGENOM" id="CLU_001981_0_1_6"/>
<dbReference type="PhylomeDB" id="Q8ZQD5"/>
<dbReference type="BioCyc" id="SENT99287:STM0960-MONOMER"/>
<dbReference type="Proteomes" id="UP000001014">
    <property type="component" value="Chromosome"/>
</dbReference>
<dbReference type="GO" id="GO:0005886">
    <property type="term" value="C:plasma membrane"/>
    <property type="evidence" value="ECO:0007669"/>
    <property type="project" value="UniProtKB-SubCell"/>
</dbReference>
<dbReference type="GO" id="GO:0005524">
    <property type="term" value="F:ATP binding"/>
    <property type="evidence" value="ECO:0007669"/>
    <property type="project" value="UniProtKB-KW"/>
</dbReference>
<dbReference type="GO" id="GO:0003677">
    <property type="term" value="F:DNA binding"/>
    <property type="evidence" value="ECO:0007669"/>
    <property type="project" value="UniProtKB-KW"/>
</dbReference>
<dbReference type="GO" id="GO:0015616">
    <property type="term" value="F:DNA translocase activity"/>
    <property type="evidence" value="ECO:0000318"/>
    <property type="project" value="GO_Central"/>
</dbReference>
<dbReference type="GO" id="GO:0051301">
    <property type="term" value="P:cell division"/>
    <property type="evidence" value="ECO:0007669"/>
    <property type="project" value="UniProtKB-KW"/>
</dbReference>
<dbReference type="GO" id="GO:0007059">
    <property type="term" value="P:chromosome segregation"/>
    <property type="evidence" value="ECO:0007669"/>
    <property type="project" value="UniProtKB-KW"/>
</dbReference>
<dbReference type="CDD" id="cd01127">
    <property type="entry name" value="TrwB_TraG_TraD_VirD4"/>
    <property type="match status" value="1"/>
</dbReference>
<dbReference type="FunFam" id="3.40.50.300:FF:000209">
    <property type="entry name" value="Cell division protein FtsK"/>
    <property type="match status" value="1"/>
</dbReference>
<dbReference type="FunFam" id="1.10.10.10:FF:000268">
    <property type="entry name" value="DNA translocase FtsK"/>
    <property type="match status" value="1"/>
</dbReference>
<dbReference type="FunFam" id="3.30.980.40:FF:000001">
    <property type="entry name" value="DNA translocase FtsK"/>
    <property type="match status" value="1"/>
</dbReference>
<dbReference type="Gene3D" id="3.30.980.40">
    <property type="match status" value="1"/>
</dbReference>
<dbReference type="Gene3D" id="3.40.50.300">
    <property type="entry name" value="P-loop containing nucleotide triphosphate hydrolases"/>
    <property type="match status" value="1"/>
</dbReference>
<dbReference type="Gene3D" id="1.10.10.10">
    <property type="entry name" value="Winged helix-like DNA-binding domain superfamily/Winged helix DNA-binding domain"/>
    <property type="match status" value="1"/>
</dbReference>
<dbReference type="InterPro" id="IPR050206">
    <property type="entry name" value="FtsK/SpoIIIE/SftA"/>
</dbReference>
<dbReference type="InterPro" id="IPR025199">
    <property type="entry name" value="FtsK_4TM"/>
</dbReference>
<dbReference type="InterPro" id="IPR041027">
    <property type="entry name" value="FtsK_alpha"/>
</dbReference>
<dbReference type="InterPro" id="IPR002543">
    <property type="entry name" value="FtsK_dom"/>
</dbReference>
<dbReference type="InterPro" id="IPR018541">
    <property type="entry name" value="Ftsk_gamma"/>
</dbReference>
<dbReference type="InterPro" id="IPR027417">
    <property type="entry name" value="P-loop_NTPase"/>
</dbReference>
<dbReference type="InterPro" id="IPR036388">
    <property type="entry name" value="WH-like_DNA-bd_sf"/>
</dbReference>
<dbReference type="InterPro" id="IPR036390">
    <property type="entry name" value="WH_DNA-bd_sf"/>
</dbReference>
<dbReference type="NCBIfam" id="NF007615">
    <property type="entry name" value="PRK10263.1"/>
    <property type="match status" value="1"/>
</dbReference>
<dbReference type="PANTHER" id="PTHR22683:SF41">
    <property type="entry name" value="DNA TRANSLOCASE FTSK"/>
    <property type="match status" value="1"/>
</dbReference>
<dbReference type="PANTHER" id="PTHR22683">
    <property type="entry name" value="SPORULATION PROTEIN RELATED"/>
    <property type="match status" value="1"/>
</dbReference>
<dbReference type="Pfam" id="PF13491">
    <property type="entry name" value="FtsK_4TM"/>
    <property type="match status" value="1"/>
</dbReference>
<dbReference type="Pfam" id="PF17854">
    <property type="entry name" value="FtsK_alpha"/>
    <property type="match status" value="1"/>
</dbReference>
<dbReference type="Pfam" id="PF09397">
    <property type="entry name" value="FtsK_gamma"/>
    <property type="match status" value="1"/>
</dbReference>
<dbReference type="Pfam" id="PF01580">
    <property type="entry name" value="FtsK_SpoIIIE"/>
    <property type="match status" value="1"/>
</dbReference>
<dbReference type="SMART" id="SM00843">
    <property type="entry name" value="Ftsk_gamma"/>
    <property type="match status" value="1"/>
</dbReference>
<dbReference type="SUPFAM" id="SSF52540">
    <property type="entry name" value="P-loop containing nucleoside triphosphate hydrolases"/>
    <property type="match status" value="1"/>
</dbReference>
<dbReference type="SUPFAM" id="SSF46785">
    <property type="entry name" value="Winged helix' DNA-binding domain"/>
    <property type="match status" value="1"/>
</dbReference>
<dbReference type="PROSITE" id="PS50901">
    <property type="entry name" value="FTSK"/>
    <property type="match status" value="1"/>
</dbReference>
<organism>
    <name type="scientific">Salmonella typhimurium (strain LT2 / SGSC1412 / ATCC 700720)</name>
    <dbReference type="NCBI Taxonomy" id="99287"/>
    <lineage>
        <taxon>Bacteria</taxon>
        <taxon>Pseudomonadati</taxon>
        <taxon>Pseudomonadota</taxon>
        <taxon>Gammaproteobacteria</taxon>
        <taxon>Enterobacterales</taxon>
        <taxon>Enterobacteriaceae</taxon>
        <taxon>Salmonella</taxon>
    </lineage>
</organism>
<name>FTSK_SALTY</name>
<reference key="1">
    <citation type="journal article" date="2001" name="Nature">
        <title>Complete genome sequence of Salmonella enterica serovar Typhimurium LT2.</title>
        <authorList>
            <person name="McClelland M."/>
            <person name="Sanderson K.E."/>
            <person name="Spieth J."/>
            <person name="Clifton S.W."/>
            <person name="Latreille P."/>
            <person name="Courtney L."/>
            <person name="Porwollik S."/>
            <person name="Ali J."/>
            <person name="Dante M."/>
            <person name="Du F."/>
            <person name="Hou S."/>
            <person name="Layman D."/>
            <person name="Leonard S."/>
            <person name="Nguyen C."/>
            <person name="Scott K."/>
            <person name="Holmes A."/>
            <person name="Grewal N."/>
            <person name="Mulvaney E."/>
            <person name="Ryan E."/>
            <person name="Sun H."/>
            <person name="Florea L."/>
            <person name="Miller W."/>
            <person name="Stoneking T."/>
            <person name="Nhan M."/>
            <person name="Waterston R."/>
            <person name="Wilson R.K."/>
        </authorList>
    </citation>
    <scope>NUCLEOTIDE SEQUENCE [LARGE SCALE GENOMIC DNA]</scope>
    <source>
        <strain>LT2 / SGSC1412 / ATCC 700720</strain>
    </source>
</reference>
<evidence type="ECO:0000250" key="1"/>
<evidence type="ECO:0000250" key="2">
    <source>
        <dbReference type="UniProtKB" id="P46889"/>
    </source>
</evidence>
<evidence type="ECO:0000255" key="3">
    <source>
        <dbReference type="PROSITE-ProRule" id="PRU00289"/>
    </source>
</evidence>
<evidence type="ECO:0000256" key="4">
    <source>
        <dbReference type="SAM" id="MobiDB-lite"/>
    </source>
</evidence>
<evidence type="ECO:0000305" key="5"/>
<feature type="chain" id="PRO_0000098289" description="DNA translocase FtsK">
    <location>
        <begin position="1"/>
        <end position="1351"/>
    </location>
</feature>
<feature type="topological domain" description="Cytoplasmic" evidence="2">
    <location>
        <begin position="1"/>
        <end position="24"/>
    </location>
</feature>
<feature type="transmembrane region" description="Helical" evidence="2">
    <location>
        <begin position="25"/>
        <end position="44"/>
    </location>
</feature>
<feature type="topological domain" description="Periplasmic" evidence="2">
    <location>
        <begin position="45"/>
        <end position="74"/>
    </location>
</feature>
<feature type="transmembrane region" description="Helical" evidence="2">
    <location>
        <begin position="75"/>
        <end position="98"/>
    </location>
</feature>
<feature type="topological domain" description="Cytoplasmic" evidence="2">
    <location>
        <begin position="99"/>
        <end position="115"/>
    </location>
</feature>
<feature type="transmembrane region" description="Helical" evidence="2">
    <location>
        <begin position="116"/>
        <end position="132"/>
    </location>
</feature>
<feature type="topological domain" description="Periplasmic" evidence="2">
    <location>
        <begin position="133"/>
        <end position="162"/>
    </location>
</feature>
<feature type="transmembrane region" description="Helical" evidence="2">
    <location>
        <begin position="163"/>
        <end position="179"/>
    </location>
</feature>
<feature type="topological domain" description="Cytoplasmic" evidence="2">
    <location>
        <begin position="180"/>
        <end position="1351"/>
    </location>
</feature>
<feature type="domain" description="FtsK" evidence="3">
    <location>
        <begin position="996"/>
        <end position="1209"/>
    </location>
</feature>
<feature type="region of interest" description="Disordered" evidence="4">
    <location>
        <begin position="357"/>
        <end position="482"/>
    </location>
</feature>
<feature type="region of interest" description="Disordered" evidence="4">
    <location>
        <begin position="559"/>
        <end position="589"/>
    </location>
</feature>
<feature type="region of interest" description="Disordered" evidence="4">
    <location>
        <begin position="602"/>
        <end position="871"/>
    </location>
</feature>
<feature type="region of interest" description="Disordered" evidence="4">
    <location>
        <begin position="1264"/>
        <end position="1283"/>
    </location>
</feature>
<feature type="compositionally biased region" description="Polar residues" evidence="4">
    <location>
        <begin position="385"/>
        <end position="395"/>
    </location>
</feature>
<feature type="compositionally biased region" description="Low complexity" evidence="4">
    <location>
        <begin position="402"/>
        <end position="415"/>
    </location>
</feature>
<feature type="compositionally biased region" description="Low complexity" evidence="4">
    <location>
        <begin position="422"/>
        <end position="433"/>
    </location>
</feature>
<feature type="compositionally biased region" description="Basic and acidic residues" evidence="4">
    <location>
        <begin position="602"/>
        <end position="614"/>
    </location>
</feature>
<feature type="compositionally biased region" description="Low complexity" evidence="4">
    <location>
        <begin position="665"/>
        <end position="674"/>
    </location>
</feature>
<feature type="compositionally biased region" description="Low complexity" evidence="4">
    <location>
        <begin position="724"/>
        <end position="838"/>
    </location>
</feature>
<feature type="compositionally biased region" description="Low complexity" evidence="4">
    <location>
        <begin position="858"/>
        <end position="868"/>
    </location>
</feature>
<feature type="binding site" evidence="3">
    <location>
        <begin position="1016"/>
        <end position="1021"/>
    </location>
    <ligand>
        <name>ATP</name>
        <dbReference type="ChEBI" id="CHEBI:30616"/>
    </ligand>
</feature>